<feature type="chain" id="PRO_0000227138" description="Anthranilate phosphoribosyltransferase">
    <location>
        <begin position="1"/>
        <end position="343"/>
    </location>
</feature>
<feature type="binding site" evidence="1">
    <location>
        <position position="84"/>
    </location>
    <ligand>
        <name>5-phospho-alpha-D-ribose 1-diphosphate</name>
        <dbReference type="ChEBI" id="CHEBI:58017"/>
    </ligand>
</feature>
<feature type="binding site" evidence="1">
    <location>
        <position position="84"/>
    </location>
    <ligand>
        <name>anthranilate</name>
        <dbReference type="ChEBI" id="CHEBI:16567"/>
        <label>1</label>
    </ligand>
</feature>
<feature type="binding site" evidence="1">
    <location>
        <begin position="87"/>
        <end position="88"/>
    </location>
    <ligand>
        <name>5-phospho-alpha-D-ribose 1-diphosphate</name>
        <dbReference type="ChEBI" id="CHEBI:58017"/>
    </ligand>
</feature>
<feature type="binding site" evidence="1">
    <location>
        <position position="92"/>
    </location>
    <ligand>
        <name>5-phospho-alpha-D-ribose 1-diphosphate</name>
        <dbReference type="ChEBI" id="CHEBI:58017"/>
    </ligand>
</feature>
<feature type="binding site" evidence="1">
    <location>
        <begin position="94"/>
        <end position="97"/>
    </location>
    <ligand>
        <name>5-phospho-alpha-D-ribose 1-diphosphate</name>
        <dbReference type="ChEBI" id="CHEBI:58017"/>
    </ligand>
</feature>
<feature type="binding site" evidence="1">
    <location>
        <position position="96"/>
    </location>
    <ligand>
        <name>Mg(2+)</name>
        <dbReference type="ChEBI" id="CHEBI:18420"/>
        <label>1</label>
    </ligand>
</feature>
<feature type="binding site" evidence="1">
    <location>
        <begin position="112"/>
        <end position="120"/>
    </location>
    <ligand>
        <name>5-phospho-alpha-D-ribose 1-diphosphate</name>
        <dbReference type="ChEBI" id="CHEBI:58017"/>
    </ligand>
</feature>
<feature type="binding site" evidence="1">
    <location>
        <position position="115"/>
    </location>
    <ligand>
        <name>anthranilate</name>
        <dbReference type="ChEBI" id="CHEBI:16567"/>
        <label>1</label>
    </ligand>
</feature>
<feature type="binding site" evidence="1">
    <location>
        <position position="124"/>
    </location>
    <ligand>
        <name>5-phospho-alpha-D-ribose 1-diphosphate</name>
        <dbReference type="ChEBI" id="CHEBI:58017"/>
    </ligand>
</feature>
<feature type="binding site" evidence="1">
    <location>
        <position position="170"/>
    </location>
    <ligand>
        <name>anthranilate</name>
        <dbReference type="ChEBI" id="CHEBI:16567"/>
        <label>2</label>
    </ligand>
</feature>
<feature type="binding site" evidence="1">
    <location>
        <position position="229"/>
    </location>
    <ligand>
        <name>Mg(2+)</name>
        <dbReference type="ChEBI" id="CHEBI:18420"/>
        <label>2</label>
    </ligand>
</feature>
<feature type="binding site" evidence="1">
    <location>
        <position position="230"/>
    </location>
    <ligand>
        <name>Mg(2+)</name>
        <dbReference type="ChEBI" id="CHEBI:18420"/>
        <label>1</label>
    </ligand>
</feature>
<feature type="binding site" evidence="1">
    <location>
        <position position="230"/>
    </location>
    <ligand>
        <name>Mg(2+)</name>
        <dbReference type="ChEBI" id="CHEBI:18420"/>
        <label>2</label>
    </ligand>
</feature>
<gene>
    <name evidence="1" type="primary">trpD</name>
    <name type="ordered locus">BP3262</name>
</gene>
<keyword id="KW-0028">Amino-acid biosynthesis</keyword>
<keyword id="KW-0057">Aromatic amino acid biosynthesis</keyword>
<keyword id="KW-0328">Glycosyltransferase</keyword>
<keyword id="KW-0460">Magnesium</keyword>
<keyword id="KW-0479">Metal-binding</keyword>
<keyword id="KW-1185">Reference proteome</keyword>
<keyword id="KW-0808">Transferase</keyword>
<keyword id="KW-0822">Tryptophan biosynthesis</keyword>
<accession>Q7VU66</accession>
<name>TRPD_BORPE</name>
<organism>
    <name type="scientific">Bordetella pertussis (strain Tohama I / ATCC BAA-589 / NCTC 13251)</name>
    <dbReference type="NCBI Taxonomy" id="257313"/>
    <lineage>
        <taxon>Bacteria</taxon>
        <taxon>Pseudomonadati</taxon>
        <taxon>Pseudomonadota</taxon>
        <taxon>Betaproteobacteria</taxon>
        <taxon>Burkholderiales</taxon>
        <taxon>Alcaligenaceae</taxon>
        <taxon>Bordetella</taxon>
    </lineage>
</organism>
<sequence length="343" mass="36443">MTIAATEALTRCIEHREIFHDEMLHLMRLLMRGELSPQIASALLMGLRVKKETVGEITAAAQVMREFATPVVTPNPQDLLDMCGTGGDGSHTFNISTTAMFVAAAAGVPIAKHGNRSASSSSGSADVLEALGANLQLTPEEVAECVAATGIGFMFAPAHHGAMKNVAAVRKELGVRTIFNILGPLTNPAGAANQLMGVFHPDLVGIQVRVLERLGSRHVLVVHGKDGMDEASLGAATMVGELKDGVVREYEIHPEDYGLSMMSNRGIKVSNREESRALVIEALDNVDGVARDIVALNAGLAIYAGNKADSIPEALALAFETISNGSARAKLEEFCAYTRKFQK</sequence>
<proteinExistence type="inferred from homology"/>
<comment type="function">
    <text evidence="1">Catalyzes the transfer of the phosphoribosyl group of 5-phosphorylribose-1-pyrophosphate (PRPP) to anthranilate to yield N-(5'-phosphoribosyl)-anthranilate (PRA).</text>
</comment>
<comment type="catalytic activity">
    <reaction evidence="1">
        <text>N-(5-phospho-beta-D-ribosyl)anthranilate + diphosphate = 5-phospho-alpha-D-ribose 1-diphosphate + anthranilate</text>
        <dbReference type="Rhea" id="RHEA:11768"/>
        <dbReference type="ChEBI" id="CHEBI:16567"/>
        <dbReference type="ChEBI" id="CHEBI:18277"/>
        <dbReference type="ChEBI" id="CHEBI:33019"/>
        <dbReference type="ChEBI" id="CHEBI:58017"/>
        <dbReference type="EC" id="2.4.2.18"/>
    </reaction>
</comment>
<comment type="cofactor">
    <cofactor evidence="1">
        <name>Mg(2+)</name>
        <dbReference type="ChEBI" id="CHEBI:18420"/>
    </cofactor>
    <text evidence="1">Binds 2 magnesium ions per monomer.</text>
</comment>
<comment type="pathway">
    <text evidence="1">Amino-acid biosynthesis; L-tryptophan biosynthesis; L-tryptophan from chorismate: step 2/5.</text>
</comment>
<comment type="subunit">
    <text evidence="1">Homodimer.</text>
</comment>
<comment type="similarity">
    <text evidence="1">Belongs to the anthranilate phosphoribosyltransferase family.</text>
</comment>
<reference key="1">
    <citation type="journal article" date="2003" name="Nat. Genet.">
        <title>Comparative analysis of the genome sequences of Bordetella pertussis, Bordetella parapertussis and Bordetella bronchiseptica.</title>
        <authorList>
            <person name="Parkhill J."/>
            <person name="Sebaihia M."/>
            <person name="Preston A."/>
            <person name="Murphy L.D."/>
            <person name="Thomson N.R."/>
            <person name="Harris D.E."/>
            <person name="Holden M.T.G."/>
            <person name="Churcher C.M."/>
            <person name="Bentley S.D."/>
            <person name="Mungall K.L."/>
            <person name="Cerdeno-Tarraga A.-M."/>
            <person name="Temple L."/>
            <person name="James K.D."/>
            <person name="Harris B."/>
            <person name="Quail M.A."/>
            <person name="Achtman M."/>
            <person name="Atkin R."/>
            <person name="Baker S."/>
            <person name="Basham D."/>
            <person name="Bason N."/>
            <person name="Cherevach I."/>
            <person name="Chillingworth T."/>
            <person name="Collins M."/>
            <person name="Cronin A."/>
            <person name="Davis P."/>
            <person name="Doggett J."/>
            <person name="Feltwell T."/>
            <person name="Goble A."/>
            <person name="Hamlin N."/>
            <person name="Hauser H."/>
            <person name="Holroyd S."/>
            <person name="Jagels K."/>
            <person name="Leather S."/>
            <person name="Moule S."/>
            <person name="Norberczak H."/>
            <person name="O'Neil S."/>
            <person name="Ormond D."/>
            <person name="Price C."/>
            <person name="Rabbinowitsch E."/>
            <person name="Rutter S."/>
            <person name="Sanders M."/>
            <person name="Saunders D."/>
            <person name="Seeger K."/>
            <person name="Sharp S."/>
            <person name="Simmonds M."/>
            <person name="Skelton J."/>
            <person name="Squares R."/>
            <person name="Squares S."/>
            <person name="Stevens K."/>
            <person name="Unwin L."/>
            <person name="Whitehead S."/>
            <person name="Barrell B.G."/>
            <person name="Maskell D.J."/>
        </authorList>
    </citation>
    <scope>NUCLEOTIDE SEQUENCE [LARGE SCALE GENOMIC DNA]</scope>
    <source>
        <strain>Tohama I / ATCC BAA-589 / NCTC 13251</strain>
    </source>
</reference>
<evidence type="ECO:0000255" key="1">
    <source>
        <dbReference type="HAMAP-Rule" id="MF_00211"/>
    </source>
</evidence>
<protein>
    <recommendedName>
        <fullName evidence="1">Anthranilate phosphoribosyltransferase</fullName>
        <ecNumber evidence="1">2.4.2.18</ecNumber>
    </recommendedName>
</protein>
<dbReference type="EC" id="2.4.2.18" evidence="1"/>
<dbReference type="EMBL" id="BX640421">
    <property type="protein sequence ID" value="CAE43528.1"/>
    <property type="molecule type" value="Genomic_DNA"/>
</dbReference>
<dbReference type="RefSeq" id="NP_881806.1">
    <property type="nucleotide sequence ID" value="NC_002929.2"/>
</dbReference>
<dbReference type="RefSeq" id="WP_003817833.1">
    <property type="nucleotide sequence ID" value="NZ_CP039022.1"/>
</dbReference>
<dbReference type="SMR" id="Q7VU66"/>
<dbReference type="STRING" id="257313.BP3262"/>
<dbReference type="PaxDb" id="257313-BP3262"/>
<dbReference type="GeneID" id="69603188"/>
<dbReference type="KEGG" id="bpe:BP3262"/>
<dbReference type="PATRIC" id="fig|257313.5.peg.3531"/>
<dbReference type="eggNOG" id="COG0547">
    <property type="taxonomic scope" value="Bacteria"/>
</dbReference>
<dbReference type="HOGENOM" id="CLU_034315_2_1_4"/>
<dbReference type="UniPathway" id="UPA00035">
    <property type="reaction ID" value="UER00041"/>
</dbReference>
<dbReference type="Proteomes" id="UP000002676">
    <property type="component" value="Chromosome"/>
</dbReference>
<dbReference type="GO" id="GO:0005829">
    <property type="term" value="C:cytosol"/>
    <property type="evidence" value="ECO:0007669"/>
    <property type="project" value="TreeGrafter"/>
</dbReference>
<dbReference type="GO" id="GO:0004048">
    <property type="term" value="F:anthranilate phosphoribosyltransferase activity"/>
    <property type="evidence" value="ECO:0007669"/>
    <property type="project" value="UniProtKB-UniRule"/>
</dbReference>
<dbReference type="GO" id="GO:0000287">
    <property type="term" value="F:magnesium ion binding"/>
    <property type="evidence" value="ECO:0007669"/>
    <property type="project" value="UniProtKB-UniRule"/>
</dbReference>
<dbReference type="GO" id="GO:0000162">
    <property type="term" value="P:L-tryptophan biosynthetic process"/>
    <property type="evidence" value="ECO:0007669"/>
    <property type="project" value="UniProtKB-UniRule"/>
</dbReference>
<dbReference type="FunFam" id="3.40.1030.10:FF:000002">
    <property type="entry name" value="Anthranilate phosphoribosyltransferase"/>
    <property type="match status" value="1"/>
</dbReference>
<dbReference type="Gene3D" id="3.40.1030.10">
    <property type="entry name" value="Nucleoside phosphorylase/phosphoribosyltransferase catalytic domain"/>
    <property type="match status" value="1"/>
</dbReference>
<dbReference type="Gene3D" id="1.20.970.10">
    <property type="entry name" value="Transferase, Pyrimidine Nucleoside Phosphorylase, Chain C"/>
    <property type="match status" value="1"/>
</dbReference>
<dbReference type="HAMAP" id="MF_00211">
    <property type="entry name" value="TrpD"/>
    <property type="match status" value="1"/>
</dbReference>
<dbReference type="InterPro" id="IPR005940">
    <property type="entry name" value="Anthranilate_Pribosyl_Tfrase"/>
</dbReference>
<dbReference type="InterPro" id="IPR000312">
    <property type="entry name" value="Glycosyl_Trfase_fam3"/>
</dbReference>
<dbReference type="InterPro" id="IPR017459">
    <property type="entry name" value="Glycosyl_Trfase_fam3_N_dom"/>
</dbReference>
<dbReference type="InterPro" id="IPR036320">
    <property type="entry name" value="Glycosyl_Trfase_fam3_N_dom_sf"/>
</dbReference>
<dbReference type="InterPro" id="IPR035902">
    <property type="entry name" value="Nuc_phospho_transferase"/>
</dbReference>
<dbReference type="NCBIfam" id="TIGR01245">
    <property type="entry name" value="trpD"/>
    <property type="match status" value="1"/>
</dbReference>
<dbReference type="PANTHER" id="PTHR43285">
    <property type="entry name" value="ANTHRANILATE PHOSPHORIBOSYLTRANSFERASE"/>
    <property type="match status" value="1"/>
</dbReference>
<dbReference type="PANTHER" id="PTHR43285:SF2">
    <property type="entry name" value="ANTHRANILATE PHOSPHORIBOSYLTRANSFERASE"/>
    <property type="match status" value="1"/>
</dbReference>
<dbReference type="Pfam" id="PF02885">
    <property type="entry name" value="Glycos_trans_3N"/>
    <property type="match status" value="1"/>
</dbReference>
<dbReference type="Pfam" id="PF00591">
    <property type="entry name" value="Glycos_transf_3"/>
    <property type="match status" value="1"/>
</dbReference>
<dbReference type="SUPFAM" id="SSF52418">
    <property type="entry name" value="Nucleoside phosphorylase/phosphoribosyltransferase catalytic domain"/>
    <property type="match status" value="1"/>
</dbReference>
<dbReference type="SUPFAM" id="SSF47648">
    <property type="entry name" value="Nucleoside phosphorylase/phosphoribosyltransferase N-terminal domain"/>
    <property type="match status" value="1"/>
</dbReference>